<comment type="subunit">
    <text evidence="1">Forms oligomers.</text>
</comment>
<comment type="subcellular location">
    <subcellularLocation>
        <location evidence="1">Cytoplasm</location>
        <location evidence="1">Nucleoid</location>
    </subcellularLocation>
</comment>
<comment type="similarity">
    <text evidence="1">Belongs to the MraZ family.</text>
</comment>
<gene>
    <name evidence="1" type="primary">mraZ</name>
    <name type="ordered locus">Lcho_0513</name>
</gene>
<feature type="chain" id="PRO_1000134808" description="Transcriptional regulator MraZ">
    <location>
        <begin position="1"/>
        <end position="146"/>
    </location>
</feature>
<feature type="domain" description="SpoVT-AbrB 1" evidence="2">
    <location>
        <begin position="9"/>
        <end position="55"/>
    </location>
</feature>
<feature type="domain" description="SpoVT-AbrB 2" evidence="2">
    <location>
        <begin position="81"/>
        <end position="124"/>
    </location>
</feature>
<accession>B1XY19</accession>
<reference key="1">
    <citation type="submission" date="2008-03" db="EMBL/GenBank/DDBJ databases">
        <title>Complete sequence of Leptothrix cholodnii SP-6.</title>
        <authorList>
            <consortium name="US DOE Joint Genome Institute"/>
            <person name="Copeland A."/>
            <person name="Lucas S."/>
            <person name="Lapidus A."/>
            <person name="Glavina del Rio T."/>
            <person name="Dalin E."/>
            <person name="Tice H."/>
            <person name="Bruce D."/>
            <person name="Goodwin L."/>
            <person name="Pitluck S."/>
            <person name="Chertkov O."/>
            <person name="Brettin T."/>
            <person name="Detter J.C."/>
            <person name="Han C."/>
            <person name="Kuske C.R."/>
            <person name="Schmutz J."/>
            <person name="Larimer F."/>
            <person name="Land M."/>
            <person name="Hauser L."/>
            <person name="Kyrpides N."/>
            <person name="Lykidis A."/>
            <person name="Emerson D."/>
            <person name="Richardson P."/>
        </authorList>
    </citation>
    <scope>NUCLEOTIDE SEQUENCE [LARGE SCALE GENOMIC DNA]</scope>
    <source>
        <strain>ATCC 51168 / LMG 8142 / SP-6</strain>
    </source>
</reference>
<name>MRAZ_LEPCP</name>
<evidence type="ECO:0000255" key="1">
    <source>
        <dbReference type="HAMAP-Rule" id="MF_01008"/>
    </source>
</evidence>
<evidence type="ECO:0000255" key="2">
    <source>
        <dbReference type="PROSITE-ProRule" id="PRU01076"/>
    </source>
</evidence>
<sequence length="146" mass="15894">MADFHFQGTSALALDAKGRVTVPARHRESLVSLAGSQLTLTKHPEGCLMVFPRPVWEGFRAKVEALPMAASGWKRIFLGSAMDVEIDSGSRMLISPELRAAAGLVHDVLLIGMGNHLELWDAQRQASAEAAVLQQPMPDVLQDFSF</sequence>
<dbReference type="EMBL" id="CP001013">
    <property type="protein sequence ID" value="ACB32788.1"/>
    <property type="molecule type" value="Genomic_DNA"/>
</dbReference>
<dbReference type="RefSeq" id="WP_012345550.1">
    <property type="nucleotide sequence ID" value="NC_010524.1"/>
</dbReference>
<dbReference type="SMR" id="B1XY19"/>
<dbReference type="STRING" id="395495.Lcho_0513"/>
<dbReference type="KEGG" id="lch:Lcho_0513"/>
<dbReference type="eggNOG" id="COG2001">
    <property type="taxonomic scope" value="Bacteria"/>
</dbReference>
<dbReference type="HOGENOM" id="CLU_107907_2_1_4"/>
<dbReference type="OrthoDB" id="9807753at2"/>
<dbReference type="Proteomes" id="UP000001693">
    <property type="component" value="Chromosome"/>
</dbReference>
<dbReference type="GO" id="GO:0005737">
    <property type="term" value="C:cytoplasm"/>
    <property type="evidence" value="ECO:0007669"/>
    <property type="project" value="UniProtKB-UniRule"/>
</dbReference>
<dbReference type="GO" id="GO:0009295">
    <property type="term" value="C:nucleoid"/>
    <property type="evidence" value="ECO:0007669"/>
    <property type="project" value="UniProtKB-SubCell"/>
</dbReference>
<dbReference type="GO" id="GO:0003700">
    <property type="term" value="F:DNA-binding transcription factor activity"/>
    <property type="evidence" value="ECO:0007669"/>
    <property type="project" value="UniProtKB-UniRule"/>
</dbReference>
<dbReference type="GO" id="GO:0000976">
    <property type="term" value="F:transcription cis-regulatory region binding"/>
    <property type="evidence" value="ECO:0007669"/>
    <property type="project" value="TreeGrafter"/>
</dbReference>
<dbReference type="GO" id="GO:2000143">
    <property type="term" value="P:negative regulation of DNA-templated transcription initiation"/>
    <property type="evidence" value="ECO:0007669"/>
    <property type="project" value="TreeGrafter"/>
</dbReference>
<dbReference type="CDD" id="cd16321">
    <property type="entry name" value="MraZ_C"/>
    <property type="match status" value="1"/>
</dbReference>
<dbReference type="CDD" id="cd16320">
    <property type="entry name" value="MraZ_N"/>
    <property type="match status" value="1"/>
</dbReference>
<dbReference type="Gene3D" id="3.40.1550.20">
    <property type="entry name" value="Transcriptional regulator MraZ domain"/>
    <property type="match status" value="1"/>
</dbReference>
<dbReference type="HAMAP" id="MF_01008">
    <property type="entry name" value="MraZ"/>
    <property type="match status" value="1"/>
</dbReference>
<dbReference type="InterPro" id="IPR003444">
    <property type="entry name" value="MraZ"/>
</dbReference>
<dbReference type="InterPro" id="IPR035644">
    <property type="entry name" value="MraZ_C"/>
</dbReference>
<dbReference type="InterPro" id="IPR020603">
    <property type="entry name" value="MraZ_dom"/>
</dbReference>
<dbReference type="InterPro" id="IPR035642">
    <property type="entry name" value="MraZ_N"/>
</dbReference>
<dbReference type="InterPro" id="IPR038619">
    <property type="entry name" value="MraZ_sf"/>
</dbReference>
<dbReference type="InterPro" id="IPR007159">
    <property type="entry name" value="SpoVT-AbrB_dom"/>
</dbReference>
<dbReference type="InterPro" id="IPR037914">
    <property type="entry name" value="SpoVT-AbrB_sf"/>
</dbReference>
<dbReference type="PANTHER" id="PTHR34701">
    <property type="entry name" value="TRANSCRIPTIONAL REGULATOR MRAZ"/>
    <property type="match status" value="1"/>
</dbReference>
<dbReference type="PANTHER" id="PTHR34701:SF1">
    <property type="entry name" value="TRANSCRIPTIONAL REGULATOR MRAZ"/>
    <property type="match status" value="1"/>
</dbReference>
<dbReference type="Pfam" id="PF02381">
    <property type="entry name" value="MraZ"/>
    <property type="match status" value="2"/>
</dbReference>
<dbReference type="SUPFAM" id="SSF89447">
    <property type="entry name" value="AbrB/MazE/MraZ-like"/>
    <property type="match status" value="1"/>
</dbReference>
<dbReference type="PROSITE" id="PS51740">
    <property type="entry name" value="SPOVT_ABRB"/>
    <property type="match status" value="2"/>
</dbReference>
<protein>
    <recommendedName>
        <fullName>Transcriptional regulator MraZ</fullName>
    </recommendedName>
</protein>
<proteinExistence type="inferred from homology"/>
<organism>
    <name type="scientific">Leptothrix cholodnii (strain ATCC 51168 / LMG 8142 / SP-6)</name>
    <name type="common">Leptothrix discophora (strain SP-6)</name>
    <dbReference type="NCBI Taxonomy" id="395495"/>
    <lineage>
        <taxon>Bacteria</taxon>
        <taxon>Pseudomonadati</taxon>
        <taxon>Pseudomonadota</taxon>
        <taxon>Betaproteobacteria</taxon>
        <taxon>Burkholderiales</taxon>
        <taxon>Sphaerotilaceae</taxon>
        <taxon>Leptothrix</taxon>
    </lineage>
</organism>
<keyword id="KW-0963">Cytoplasm</keyword>
<keyword id="KW-0238">DNA-binding</keyword>
<keyword id="KW-1185">Reference proteome</keyword>
<keyword id="KW-0677">Repeat</keyword>
<keyword id="KW-0804">Transcription</keyword>
<keyword id="KW-0805">Transcription regulation</keyword>